<organism>
    <name type="scientific">Idiomarina loihiensis (strain ATCC BAA-735 / DSM 15497 / L2-TR)</name>
    <dbReference type="NCBI Taxonomy" id="283942"/>
    <lineage>
        <taxon>Bacteria</taxon>
        <taxon>Pseudomonadati</taxon>
        <taxon>Pseudomonadota</taxon>
        <taxon>Gammaproteobacteria</taxon>
        <taxon>Alteromonadales</taxon>
        <taxon>Idiomarinaceae</taxon>
        <taxon>Idiomarina</taxon>
    </lineage>
</organism>
<comment type="function">
    <text evidence="1">Catalyzes the dephosphorylation of undecaprenyl diphosphate (UPP). Confers resistance to bacitracin.</text>
</comment>
<comment type="catalytic activity">
    <reaction evidence="1">
        <text>di-trans,octa-cis-undecaprenyl diphosphate + H2O = di-trans,octa-cis-undecaprenyl phosphate + phosphate + H(+)</text>
        <dbReference type="Rhea" id="RHEA:28094"/>
        <dbReference type="ChEBI" id="CHEBI:15377"/>
        <dbReference type="ChEBI" id="CHEBI:15378"/>
        <dbReference type="ChEBI" id="CHEBI:43474"/>
        <dbReference type="ChEBI" id="CHEBI:58405"/>
        <dbReference type="ChEBI" id="CHEBI:60392"/>
        <dbReference type="EC" id="3.6.1.27"/>
    </reaction>
</comment>
<comment type="subcellular location">
    <subcellularLocation>
        <location evidence="1">Cell inner membrane</location>
        <topology evidence="1">Multi-pass membrane protein</topology>
    </subcellularLocation>
</comment>
<comment type="miscellaneous">
    <text>Bacitracin is thought to be involved in the inhibition of peptidoglycan synthesis by sequestering undecaprenyl diphosphate, thereby reducing the pool of lipid carrier available.</text>
</comment>
<comment type="similarity">
    <text evidence="1">Belongs to the UppP family.</text>
</comment>
<feature type="chain" id="PRO_0000151157" description="Undecaprenyl-diphosphatase">
    <location>
        <begin position="1"/>
        <end position="265"/>
    </location>
</feature>
<feature type="transmembrane region" description="Helical" evidence="1">
    <location>
        <begin position="1"/>
        <end position="21"/>
    </location>
</feature>
<feature type="transmembrane region" description="Helical" evidence="1">
    <location>
        <begin position="39"/>
        <end position="59"/>
    </location>
</feature>
<feature type="transmembrane region" description="Helical" evidence="1">
    <location>
        <begin position="87"/>
        <end position="107"/>
    </location>
</feature>
<feature type="transmembrane region" description="Helical" evidence="1">
    <location>
        <begin position="110"/>
        <end position="130"/>
    </location>
</feature>
<feature type="transmembrane region" description="Helical" evidence="1">
    <location>
        <begin position="144"/>
        <end position="164"/>
    </location>
</feature>
<feature type="transmembrane region" description="Helical" evidence="1">
    <location>
        <begin position="187"/>
        <end position="207"/>
    </location>
</feature>
<feature type="transmembrane region" description="Helical" evidence="1">
    <location>
        <begin position="217"/>
        <end position="237"/>
    </location>
</feature>
<feature type="transmembrane region" description="Helical" evidence="1">
    <location>
        <begin position="244"/>
        <end position="264"/>
    </location>
</feature>
<dbReference type="EC" id="3.6.1.27" evidence="1"/>
<dbReference type="EMBL" id="AE017340">
    <property type="protein sequence ID" value="AAV82277.1"/>
    <property type="molecule type" value="Genomic_DNA"/>
</dbReference>
<dbReference type="RefSeq" id="WP_011234683.1">
    <property type="nucleotide sequence ID" value="NC_006512.1"/>
</dbReference>
<dbReference type="SMR" id="Q5QUY5"/>
<dbReference type="STRING" id="283942.IL1437"/>
<dbReference type="GeneID" id="41336614"/>
<dbReference type="KEGG" id="ilo:IL1437"/>
<dbReference type="eggNOG" id="COG1968">
    <property type="taxonomic scope" value="Bacteria"/>
</dbReference>
<dbReference type="HOGENOM" id="CLU_060296_1_0_6"/>
<dbReference type="OrthoDB" id="9808289at2"/>
<dbReference type="Proteomes" id="UP000001171">
    <property type="component" value="Chromosome"/>
</dbReference>
<dbReference type="GO" id="GO:0005886">
    <property type="term" value="C:plasma membrane"/>
    <property type="evidence" value="ECO:0007669"/>
    <property type="project" value="UniProtKB-SubCell"/>
</dbReference>
<dbReference type="GO" id="GO:0050380">
    <property type="term" value="F:undecaprenyl-diphosphatase activity"/>
    <property type="evidence" value="ECO:0007669"/>
    <property type="project" value="UniProtKB-UniRule"/>
</dbReference>
<dbReference type="GO" id="GO:0071555">
    <property type="term" value="P:cell wall organization"/>
    <property type="evidence" value="ECO:0007669"/>
    <property type="project" value="UniProtKB-KW"/>
</dbReference>
<dbReference type="GO" id="GO:0009252">
    <property type="term" value="P:peptidoglycan biosynthetic process"/>
    <property type="evidence" value="ECO:0007669"/>
    <property type="project" value="UniProtKB-KW"/>
</dbReference>
<dbReference type="GO" id="GO:0008360">
    <property type="term" value="P:regulation of cell shape"/>
    <property type="evidence" value="ECO:0007669"/>
    <property type="project" value="UniProtKB-KW"/>
</dbReference>
<dbReference type="GO" id="GO:0046677">
    <property type="term" value="P:response to antibiotic"/>
    <property type="evidence" value="ECO:0007669"/>
    <property type="project" value="UniProtKB-UniRule"/>
</dbReference>
<dbReference type="HAMAP" id="MF_01006">
    <property type="entry name" value="Undec_diphosphatase"/>
    <property type="match status" value="1"/>
</dbReference>
<dbReference type="InterPro" id="IPR003824">
    <property type="entry name" value="UppP"/>
</dbReference>
<dbReference type="NCBIfam" id="NF001393">
    <property type="entry name" value="PRK00281.2-4"/>
    <property type="match status" value="1"/>
</dbReference>
<dbReference type="NCBIfam" id="TIGR00753">
    <property type="entry name" value="undec_PP_bacA"/>
    <property type="match status" value="1"/>
</dbReference>
<dbReference type="PANTHER" id="PTHR30622">
    <property type="entry name" value="UNDECAPRENYL-DIPHOSPHATASE"/>
    <property type="match status" value="1"/>
</dbReference>
<dbReference type="PANTHER" id="PTHR30622:SF4">
    <property type="entry name" value="UNDECAPRENYL-DIPHOSPHATASE"/>
    <property type="match status" value="1"/>
</dbReference>
<dbReference type="Pfam" id="PF02673">
    <property type="entry name" value="BacA"/>
    <property type="match status" value="1"/>
</dbReference>
<accession>Q5QUY5</accession>
<reference key="1">
    <citation type="journal article" date="2004" name="Proc. Natl. Acad. Sci. U.S.A.">
        <title>Genome sequence of the deep-sea gamma-proteobacterium Idiomarina loihiensis reveals amino acid fermentation as a source of carbon and energy.</title>
        <authorList>
            <person name="Hou S."/>
            <person name="Saw J.H."/>
            <person name="Lee K.S."/>
            <person name="Freitas T.A."/>
            <person name="Belisle C."/>
            <person name="Kawarabayasi Y."/>
            <person name="Donachie S.P."/>
            <person name="Pikina A."/>
            <person name="Galperin M.Y."/>
            <person name="Koonin E.V."/>
            <person name="Makarova K.S."/>
            <person name="Omelchenko M.V."/>
            <person name="Sorokin A."/>
            <person name="Wolf Y.I."/>
            <person name="Li Q.X."/>
            <person name="Keum Y.S."/>
            <person name="Campbell S."/>
            <person name="Denery J."/>
            <person name="Aizawa S."/>
            <person name="Shibata S."/>
            <person name="Malahoff A."/>
            <person name="Alam M."/>
        </authorList>
    </citation>
    <scope>NUCLEOTIDE SEQUENCE [LARGE SCALE GENOMIC DNA]</scope>
    <source>
        <strain>ATCC BAA-735 / DSM 15497 / L2-TR</strain>
    </source>
</reference>
<evidence type="ECO:0000255" key="1">
    <source>
        <dbReference type="HAMAP-Rule" id="MF_01006"/>
    </source>
</evidence>
<proteinExistence type="inferred from homology"/>
<name>UPPP_IDILO</name>
<sequence length="265" mass="28431">MDFLQSIILGIIQGITEFLPISSSAHLILMPILTGWDDQGVGFDLAVHVGTLLAVILYFRKDVSELFIDGLRSIAARQHVGQSRLGWAVVVGTIPACIAGILLLDYIDTALRAVGVIITTTVVFAVLLAAGDRFARGSRTLQDIGFKDAIIVGLAQAVALIPGTSRSGATITAGLFLGLNRESASKFSFFMAIPITAAAALVKLLTIASESIAVDWLGFLVGGIVSFLTAITAIHFFLKWLNAFGMWPYVIYRLVLAVVLYLLFF</sequence>
<gene>
    <name evidence="1" type="primary">uppP</name>
    <name type="synonym">bacA</name>
    <name type="ordered locus">IL1437</name>
</gene>
<keyword id="KW-0046">Antibiotic resistance</keyword>
<keyword id="KW-0997">Cell inner membrane</keyword>
<keyword id="KW-1003">Cell membrane</keyword>
<keyword id="KW-0133">Cell shape</keyword>
<keyword id="KW-0961">Cell wall biogenesis/degradation</keyword>
<keyword id="KW-0378">Hydrolase</keyword>
<keyword id="KW-0472">Membrane</keyword>
<keyword id="KW-0573">Peptidoglycan synthesis</keyword>
<keyword id="KW-1185">Reference proteome</keyword>
<keyword id="KW-0812">Transmembrane</keyword>
<keyword id="KW-1133">Transmembrane helix</keyword>
<protein>
    <recommendedName>
        <fullName evidence="1">Undecaprenyl-diphosphatase</fullName>
        <ecNumber evidence="1">3.6.1.27</ecNumber>
    </recommendedName>
    <alternativeName>
        <fullName evidence="1">Bacitracin resistance protein</fullName>
    </alternativeName>
    <alternativeName>
        <fullName evidence="1">Undecaprenyl pyrophosphate phosphatase</fullName>
    </alternativeName>
</protein>